<accession>P02657</accession>
<feature type="chain" id="PRO_0000156866" description="Apovitellenin-1">
    <location>
        <begin position="1"/>
        <end position="84"/>
    </location>
</feature>
<protein>
    <recommendedName>
        <fullName>Apovitellenin-1</fullName>
    </recommendedName>
    <alternativeName>
        <fullName>Apovitellenin I</fullName>
    </alternativeName>
</protein>
<evidence type="ECO:0000305" key="1"/>
<reference key="1">
    <citation type="journal article" date="1974" name="Aust. J. Biol. Sci.">
        <title>The amino acid sequence of a protein (apovitellenin I) from the low-density lipoprotein of emu egg yolk.</title>
        <authorList>
            <person name="Dopheide T.A.A."/>
            <person name="Inglis A.S."/>
        </authorList>
    </citation>
    <scope>PROTEIN SEQUENCE</scope>
</reference>
<organism>
    <name type="scientific">Dromaius novaehollandiae</name>
    <name type="common">Emu</name>
    <dbReference type="NCBI Taxonomy" id="8790"/>
    <lineage>
        <taxon>Eukaryota</taxon>
        <taxon>Metazoa</taxon>
        <taxon>Chordata</taxon>
        <taxon>Craniata</taxon>
        <taxon>Vertebrata</taxon>
        <taxon>Euteleostomi</taxon>
        <taxon>Archelosauria</taxon>
        <taxon>Archosauria</taxon>
        <taxon>Dinosauria</taxon>
        <taxon>Saurischia</taxon>
        <taxon>Theropoda</taxon>
        <taxon>Coelurosauria</taxon>
        <taxon>Aves</taxon>
        <taxon>Palaeognathae</taxon>
        <taxon>Casuariiformes</taxon>
        <taxon>Dromaiidae</taxon>
        <taxon>Dromaius</taxon>
    </lineage>
</organism>
<name>APOV1_DRONO</name>
<dbReference type="PIR" id="A03101">
    <property type="entry name" value="VLEU1"/>
</dbReference>
<dbReference type="Ensembl" id="ENSDNVT00000001392.1">
    <property type="protein sequence ID" value="ENSDNVP00000001176.1"/>
    <property type="gene ID" value="ENSDNVG00000000865.1"/>
</dbReference>
<dbReference type="Proteomes" id="UP000694423">
    <property type="component" value="Unplaced"/>
</dbReference>
<dbReference type="GO" id="GO:0042627">
    <property type="term" value="C:chylomicron"/>
    <property type="evidence" value="ECO:0007669"/>
    <property type="project" value="InterPro"/>
</dbReference>
<dbReference type="GO" id="GO:0034361">
    <property type="term" value="C:very-low-density lipoprotein particle"/>
    <property type="evidence" value="ECO:0007669"/>
    <property type="project" value="UniProtKB-KW"/>
</dbReference>
<dbReference type="GO" id="GO:0004857">
    <property type="term" value="F:enzyme inhibitor activity"/>
    <property type="evidence" value="ECO:0007669"/>
    <property type="project" value="InterPro"/>
</dbReference>
<dbReference type="GO" id="GO:0045735">
    <property type="term" value="F:nutrient reservoir activity"/>
    <property type="evidence" value="ECO:0007669"/>
    <property type="project" value="UniProtKB-KW"/>
</dbReference>
<dbReference type="GO" id="GO:0006629">
    <property type="term" value="P:lipid metabolic process"/>
    <property type="evidence" value="ECO:0007669"/>
    <property type="project" value="InterPro"/>
</dbReference>
<dbReference type="InterPro" id="IPR008404">
    <property type="entry name" value="Apo-VLDL-II"/>
</dbReference>
<dbReference type="Pfam" id="PF05418">
    <property type="entry name" value="Apo-VLDL-II"/>
    <property type="match status" value="1"/>
</dbReference>
<dbReference type="PIRSF" id="PIRSF002369">
    <property type="entry name" value="Apo-VLDL-II"/>
    <property type="match status" value="1"/>
</dbReference>
<keyword id="KW-0903">Direct protein sequencing</keyword>
<keyword id="KW-0758">Storage protein</keyword>
<keyword id="KW-0850">VLDL</keyword>
<sequence>KSIFERDNRRDWLVIPDAVAAYVYETVNKMFPKVGQFLADAAQIPVIVGTRNFLIRETSKLSILAEQMMEKVKTLWNTKVLGYY</sequence>
<proteinExistence type="evidence at protein level"/>
<comment type="function">
    <text>Protein component of the very low density lipoprotein (VLDL) of egg-laying females. Potent lipoprotein lipase inhibitor, preventing the loss of triglycerides from VLDL on their way from the liver to the growing oocytes.</text>
</comment>
<comment type="subunit">
    <text evidence="1">Monomer.</text>
</comment>
<comment type="similarity">
    <text evidence="1">Belongs to the apovitellenin family.</text>
</comment>